<keyword id="KW-0004">4Fe-4S</keyword>
<keyword id="KW-0067">ATP-binding</keyword>
<keyword id="KW-0077">Bacteriochlorophyll biosynthesis</keyword>
<keyword id="KW-0149">Chlorophyll biosynthesis</keyword>
<keyword id="KW-0408">Iron</keyword>
<keyword id="KW-0411">Iron-sulfur</keyword>
<keyword id="KW-0460">Magnesium</keyword>
<keyword id="KW-0479">Metal-binding</keyword>
<keyword id="KW-0547">Nucleotide-binding</keyword>
<keyword id="KW-0560">Oxidoreductase</keyword>
<keyword id="KW-0602">Photosynthesis</keyword>
<keyword id="KW-1185">Reference proteome</keyword>
<name>BCHL_ROSDO</name>
<reference key="1">
    <citation type="journal article" date="2007" name="J. Bacteriol.">
        <title>The complete genome sequence of Roseobacter denitrificans reveals a mixotrophic rather than photosynthetic metabolism.</title>
        <authorList>
            <person name="Swingley W.D."/>
            <person name="Sadekar S."/>
            <person name="Mastrian S.D."/>
            <person name="Matthies H.J."/>
            <person name="Hao J."/>
            <person name="Ramos H."/>
            <person name="Acharya C.R."/>
            <person name="Conrad A.L."/>
            <person name="Taylor H.L."/>
            <person name="Dejesa L.C."/>
            <person name="Shah M.K."/>
            <person name="O'Huallachain M.E."/>
            <person name="Lince M.T."/>
            <person name="Blankenship R.E."/>
            <person name="Beatty J.T."/>
            <person name="Touchman J.W."/>
        </authorList>
    </citation>
    <scope>NUCLEOTIDE SEQUENCE [LARGE SCALE GENOMIC DNA]</scope>
    <source>
        <strain>ATCC 33942 / OCh 114</strain>
    </source>
</reference>
<gene>
    <name evidence="1" type="primary">bchL</name>
    <name type="ordered locus">RD1_0136</name>
</gene>
<proteinExistence type="inferred from homology"/>
<dbReference type="EC" id="1.3.7.7" evidence="1"/>
<dbReference type="EMBL" id="CP000362">
    <property type="protein sequence ID" value="ABG29871.1"/>
    <property type="molecule type" value="Genomic_DNA"/>
</dbReference>
<dbReference type="RefSeq" id="WP_011566493.1">
    <property type="nucleotide sequence ID" value="NC_008209.1"/>
</dbReference>
<dbReference type="SMR" id="Q16DS2"/>
<dbReference type="STRING" id="375451.RD1_0136"/>
<dbReference type="KEGG" id="rde:RD1_0136"/>
<dbReference type="eggNOG" id="COG1348">
    <property type="taxonomic scope" value="Bacteria"/>
</dbReference>
<dbReference type="HOGENOM" id="CLU_059373_2_0_5"/>
<dbReference type="OrthoDB" id="9778641at2"/>
<dbReference type="UniPathway" id="UPA00671"/>
<dbReference type="Proteomes" id="UP000007029">
    <property type="component" value="Chromosome"/>
</dbReference>
<dbReference type="GO" id="GO:0051539">
    <property type="term" value="F:4 iron, 4 sulfur cluster binding"/>
    <property type="evidence" value="ECO:0007669"/>
    <property type="project" value="UniProtKB-UniRule"/>
</dbReference>
<dbReference type="GO" id="GO:0005524">
    <property type="term" value="F:ATP binding"/>
    <property type="evidence" value="ECO:0007669"/>
    <property type="project" value="UniProtKB-UniRule"/>
</dbReference>
<dbReference type="GO" id="GO:0046872">
    <property type="term" value="F:metal ion binding"/>
    <property type="evidence" value="ECO:0007669"/>
    <property type="project" value="UniProtKB-KW"/>
</dbReference>
<dbReference type="GO" id="GO:0016730">
    <property type="term" value="F:oxidoreductase activity, acting on iron-sulfur proteins as donors"/>
    <property type="evidence" value="ECO:0007669"/>
    <property type="project" value="InterPro"/>
</dbReference>
<dbReference type="GO" id="GO:0016636">
    <property type="term" value="F:oxidoreductase activity, acting on the CH-CH group of donors, iron-sulfur protein as acceptor"/>
    <property type="evidence" value="ECO:0007669"/>
    <property type="project" value="UniProtKB-UniRule"/>
</dbReference>
<dbReference type="GO" id="GO:0036070">
    <property type="term" value="P:light-independent bacteriochlorophyll biosynthetic process"/>
    <property type="evidence" value="ECO:0007669"/>
    <property type="project" value="UniProtKB-UniRule"/>
</dbReference>
<dbReference type="GO" id="GO:0019685">
    <property type="term" value="P:photosynthesis, dark reaction"/>
    <property type="evidence" value="ECO:0007669"/>
    <property type="project" value="InterPro"/>
</dbReference>
<dbReference type="CDD" id="cd02032">
    <property type="entry name" value="Bchl-like"/>
    <property type="match status" value="1"/>
</dbReference>
<dbReference type="Gene3D" id="3.40.50.300">
    <property type="entry name" value="P-loop containing nucleotide triphosphate hydrolases"/>
    <property type="match status" value="1"/>
</dbReference>
<dbReference type="HAMAP" id="MF_00355">
    <property type="entry name" value="ChlL_BchL"/>
    <property type="match status" value="1"/>
</dbReference>
<dbReference type="InterPro" id="IPR030655">
    <property type="entry name" value="NifH/chlL_CS"/>
</dbReference>
<dbReference type="InterPro" id="IPR000392">
    <property type="entry name" value="NifH/frxC"/>
</dbReference>
<dbReference type="InterPro" id="IPR027417">
    <property type="entry name" value="P-loop_NTPase"/>
</dbReference>
<dbReference type="InterPro" id="IPR005971">
    <property type="entry name" value="Protochlorophyllide_ATP-bd"/>
</dbReference>
<dbReference type="NCBIfam" id="TIGR01281">
    <property type="entry name" value="DPOR_bchL"/>
    <property type="match status" value="1"/>
</dbReference>
<dbReference type="PANTHER" id="PTHR42864">
    <property type="entry name" value="LIGHT-INDEPENDENT PROTOCHLOROPHYLLIDE REDUCTASE IRON-SULFUR ATP-BINDING PROTEIN"/>
    <property type="match status" value="1"/>
</dbReference>
<dbReference type="PANTHER" id="PTHR42864:SF2">
    <property type="entry name" value="LIGHT-INDEPENDENT PROTOCHLOROPHYLLIDE REDUCTASE IRON-SULFUR ATP-BINDING PROTEIN"/>
    <property type="match status" value="1"/>
</dbReference>
<dbReference type="Pfam" id="PF00142">
    <property type="entry name" value="Fer4_NifH"/>
    <property type="match status" value="1"/>
</dbReference>
<dbReference type="PIRSF" id="PIRSF000363">
    <property type="entry name" value="Nitrogenase_iron"/>
    <property type="match status" value="1"/>
</dbReference>
<dbReference type="PRINTS" id="PR00091">
    <property type="entry name" value="NITROGNASEII"/>
</dbReference>
<dbReference type="SUPFAM" id="SSF52540">
    <property type="entry name" value="P-loop containing nucleoside triphosphate hydrolases"/>
    <property type="match status" value="1"/>
</dbReference>
<dbReference type="PROSITE" id="PS00746">
    <property type="entry name" value="NIFH_FRXC_1"/>
    <property type="match status" value="1"/>
</dbReference>
<dbReference type="PROSITE" id="PS00692">
    <property type="entry name" value="NIFH_FRXC_2"/>
    <property type="match status" value="1"/>
</dbReference>
<dbReference type="PROSITE" id="PS51026">
    <property type="entry name" value="NIFH_FRXC_3"/>
    <property type="match status" value="1"/>
</dbReference>
<sequence length="299" mass="32686">MSPLDRTPPSLRGQDGEGSVQVHQDETAKIEGAKVFSVYGKGGIGKSTTSSNLSAAFSMLGKRVLQIGCDPKHDSTFTLTGSLVPTVIDILKEVDFHPEELRAEDFVFDGFNGVKCVEAGGPPAGTGCGGYVVGQTVKLLKQHHMLEDTDVVIFDVLGDVVCGGFAAPLQHADRALIVTANDFDSIYAMNRIIAAVQAKSKNYKVRLAGCVANRSRETDEVDRYCDTVGFNRIAHMPDLDAIRRSRLKKKTLFEMPDDEEIVQVRKEYIRLAETLWNGTEPLAPAPLPDRDIFELLGFD</sequence>
<comment type="function">
    <text evidence="1">Component of the dark-operative protochlorophyllide reductase (DPOR) that uses Mg-ATP and reduced ferredoxin to reduce ring D of protochlorophyllide (Pchlide) to form chlorophyllide a (Chlide). This reaction is light-independent. The L component serves as a unique electron donor to the NB-component of the complex, and binds Mg-ATP.</text>
</comment>
<comment type="catalytic activity">
    <reaction evidence="1">
        <text>chlorophyllide a + oxidized 2[4Fe-4S]-[ferredoxin] + 2 ADP + 2 phosphate = protochlorophyllide a + reduced 2[4Fe-4S]-[ferredoxin] + 2 ATP + 2 H2O</text>
        <dbReference type="Rhea" id="RHEA:28202"/>
        <dbReference type="Rhea" id="RHEA-COMP:10002"/>
        <dbReference type="Rhea" id="RHEA-COMP:10004"/>
        <dbReference type="ChEBI" id="CHEBI:15377"/>
        <dbReference type="ChEBI" id="CHEBI:30616"/>
        <dbReference type="ChEBI" id="CHEBI:33722"/>
        <dbReference type="ChEBI" id="CHEBI:33723"/>
        <dbReference type="ChEBI" id="CHEBI:43474"/>
        <dbReference type="ChEBI" id="CHEBI:83348"/>
        <dbReference type="ChEBI" id="CHEBI:83350"/>
        <dbReference type="ChEBI" id="CHEBI:456216"/>
        <dbReference type="EC" id="1.3.7.7"/>
    </reaction>
</comment>
<comment type="cofactor">
    <cofactor evidence="1">
        <name>[4Fe-4S] cluster</name>
        <dbReference type="ChEBI" id="CHEBI:49883"/>
    </cofactor>
    <text evidence="1">Binds 1 [4Fe-4S] cluster per dimer.</text>
</comment>
<comment type="pathway">
    <text evidence="1">Porphyrin-containing compound metabolism; bacteriochlorophyll biosynthesis (light-independent).</text>
</comment>
<comment type="subunit">
    <text evidence="1">Homodimer. Protochlorophyllide reductase is composed of three subunits; BchL, BchN and BchB.</text>
</comment>
<comment type="similarity">
    <text evidence="1">Belongs to the NifH/BchL/ChlL family.</text>
</comment>
<feature type="chain" id="PRO_0000324074" description="Light-independent protochlorophyllide reductase iron-sulfur ATP-binding protein">
    <location>
        <begin position="1"/>
        <end position="299"/>
    </location>
</feature>
<feature type="region of interest" description="Disordered" evidence="2">
    <location>
        <begin position="1"/>
        <end position="23"/>
    </location>
</feature>
<feature type="binding site" evidence="1">
    <location>
        <begin position="43"/>
        <end position="48"/>
    </location>
    <ligand>
        <name>ATP</name>
        <dbReference type="ChEBI" id="CHEBI:30616"/>
    </ligand>
</feature>
<feature type="binding site" evidence="1">
    <location>
        <position position="47"/>
    </location>
    <ligand>
        <name>Mg(2+)</name>
        <dbReference type="ChEBI" id="CHEBI:18420"/>
    </ligand>
</feature>
<feature type="binding site" evidence="1">
    <location>
        <position position="72"/>
    </location>
    <ligand>
        <name>ATP</name>
        <dbReference type="ChEBI" id="CHEBI:30616"/>
    </ligand>
</feature>
<feature type="binding site" evidence="1">
    <location>
        <position position="128"/>
    </location>
    <ligand>
        <name>[4Fe-4S] cluster</name>
        <dbReference type="ChEBI" id="CHEBI:49883"/>
        <note>ligand shared between dimeric partners</note>
    </ligand>
</feature>
<feature type="binding site" evidence="1">
    <location>
        <position position="162"/>
    </location>
    <ligand>
        <name>[4Fe-4S] cluster</name>
        <dbReference type="ChEBI" id="CHEBI:49883"/>
        <note>ligand shared between dimeric partners</note>
    </ligand>
</feature>
<feature type="binding site" evidence="1">
    <location>
        <begin position="213"/>
        <end position="214"/>
    </location>
    <ligand>
        <name>ATP</name>
        <dbReference type="ChEBI" id="CHEBI:30616"/>
    </ligand>
</feature>
<feature type="binding site" evidence="1">
    <location>
        <begin position="237"/>
        <end position="239"/>
    </location>
    <ligand>
        <name>ATP</name>
        <dbReference type="ChEBI" id="CHEBI:30616"/>
    </ligand>
</feature>
<protein>
    <recommendedName>
        <fullName evidence="1">Light-independent protochlorophyllide reductase iron-sulfur ATP-binding protein</fullName>
        <shortName evidence="1">DPOR subunit L</shortName>
        <shortName evidence="1">LI-POR subunit L</shortName>
        <ecNumber evidence="1">1.3.7.7</ecNumber>
    </recommendedName>
</protein>
<evidence type="ECO:0000255" key="1">
    <source>
        <dbReference type="HAMAP-Rule" id="MF_00355"/>
    </source>
</evidence>
<evidence type="ECO:0000256" key="2">
    <source>
        <dbReference type="SAM" id="MobiDB-lite"/>
    </source>
</evidence>
<organism>
    <name type="scientific">Roseobacter denitrificans (strain ATCC 33942 / OCh 114)</name>
    <name type="common">Erythrobacter sp. (strain OCh 114)</name>
    <name type="synonym">Roseobacter denitrificans</name>
    <dbReference type="NCBI Taxonomy" id="375451"/>
    <lineage>
        <taxon>Bacteria</taxon>
        <taxon>Pseudomonadati</taxon>
        <taxon>Pseudomonadota</taxon>
        <taxon>Alphaproteobacteria</taxon>
        <taxon>Rhodobacterales</taxon>
        <taxon>Roseobacteraceae</taxon>
        <taxon>Roseobacter</taxon>
    </lineage>
</organism>
<accession>Q16DS2</accession>